<accession>Q7A725</accession>
<dbReference type="EMBL" id="BA000018">
    <property type="protein sequence ID" value="BAB41813.1"/>
    <property type="molecule type" value="Genomic_DNA"/>
</dbReference>
<dbReference type="PIR" id="B89832">
    <property type="entry name" value="B89832"/>
</dbReference>
<dbReference type="RefSeq" id="WP_000950546.1">
    <property type="nucleotide sequence ID" value="NC_002745.2"/>
</dbReference>
<dbReference type="SMR" id="Q7A725"/>
<dbReference type="EnsemblBacteria" id="BAB41813">
    <property type="protein sequence ID" value="BAB41813"/>
    <property type="gene ID" value="BAB41813"/>
</dbReference>
<dbReference type="KEGG" id="sau:SA0581"/>
<dbReference type="HOGENOM" id="CLU_007100_9_2_9"/>
<dbReference type="GO" id="GO:0005886">
    <property type="term" value="C:plasma membrane"/>
    <property type="evidence" value="ECO:0007669"/>
    <property type="project" value="UniProtKB-SubCell"/>
</dbReference>
<dbReference type="GO" id="GO:0015297">
    <property type="term" value="F:antiporter activity"/>
    <property type="evidence" value="ECO:0007669"/>
    <property type="project" value="UniProtKB-KW"/>
</dbReference>
<dbReference type="GO" id="GO:0008137">
    <property type="term" value="F:NADH dehydrogenase (ubiquinone) activity"/>
    <property type="evidence" value="ECO:0007669"/>
    <property type="project" value="InterPro"/>
</dbReference>
<dbReference type="GO" id="GO:0042773">
    <property type="term" value="P:ATP synthesis coupled electron transport"/>
    <property type="evidence" value="ECO:0007669"/>
    <property type="project" value="InterPro"/>
</dbReference>
<dbReference type="InterPro" id="IPR050586">
    <property type="entry name" value="CPA3_Na-H_Antiporter_D"/>
</dbReference>
<dbReference type="InterPro" id="IPR003918">
    <property type="entry name" value="NADH_UbQ_OxRdtase"/>
</dbReference>
<dbReference type="InterPro" id="IPR001750">
    <property type="entry name" value="ND/Mrp_TM"/>
</dbReference>
<dbReference type="NCBIfam" id="NF009306">
    <property type="entry name" value="PRK12663.1"/>
    <property type="match status" value="1"/>
</dbReference>
<dbReference type="PANTHER" id="PTHR42703:SF1">
    <property type="entry name" value="NA(+)_H(+) ANTIPORTER SUBUNIT D1"/>
    <property type="match status" value="1"/>
</dbReference>
<dbReference type="PANTHER" id="PTHR42703">
    <property type="entry name" value="NADH DEHYDROGENASE"/>
    <property type="match status" value="1"/>
</dbReference>
<dbReference type="Pfam" id="PF00361">
    <property type="entry name" value="Proton_antipo_M"/>
    <property type="match status" value="1"/>
</dbReference>
<dbReference type="PRINTS" id="PR01437">
    <property type="entry name" value="NUOXDRDTASE4"/>
</dbReference>
<proteinExistence type="inferred from homology"/>
<gene>
    <name type="primary">mnhD2</name>
    <name type="synonym">mrpD2</name>
    <name type="ordered locus">SA0581</name>
</gene>
<keyword id="KW-0050">Antiport</keyword>
<keyword id="KW-1003">Cell membrane</keyword>
<keyword id="KW-0406">Ion transport</keyword>
<keyword id="KW-0472">Membrane</keyword>
<keyword id="KW-0812">Transmembrane</keyword>
<keyword id="KW-1133">Transmembrane helix</keyword>
<keyword id="KW-0813">Transport</keyword>
<organism>
    <name type="scientific">Staphylococcus aureus (strain N315)</name>
    <dbReference type="NCBI Taxonomy" id="158879"/>
    <lineage>
        <taxon>Bacteria</taxon>
        <taxon>Bacillati</taxon>
        <taxon>Bacillota</taxon>
        <taxon>Bacilli</taxon>
        <taxon>Bacillales</taxon>
        <taxon>Staphylococcaceae</taxon>
        <taxon>Staphylococcus</taxon>
    </lineage>
</organism>
<protein>
    <recommendedName>
        <fullName>Putative antiporter subunit mnhD2</fullName>
    </recommendedName>
    <alternativeName>
        <fullName>Mrp complex subunit D2</fullName>
    </alternativeName>
    <alternativeName>
        <fullName>Putative NADH-ubiquinone oxidoreductase subunit mnhD2</fullName>
    </alternativeName>
</protein>
<sequence>MLSNLLILPMLLPFLCALILVFLKNNDRISKYLYLGTMTITTIISLMLLIYVQRHRPITLDFGGWSAPFGIQFLGDSLSLIMVTTASFVITLIMAYGFGRGEHKANRYHLPSFILFLSVGVIGSFLTSDLFNLYVMFEIMLLASFVLITLGQSVEQLRAAIIYVVLNIIGSWLFLLGIGLLYKTVGTLNFSHIAMRLNDMGDNRTVTMISLIFLVAFSAKAALVLFMWLPKAYAVLNTELAALFAALMTKVGAYALIRFFTLLFDQHNDLIHPLLATMAAITMVIGAIGVIAYKDIKKIAAYQVIISIGFIILGLGTNTFAGINGAIFYLVNDIVVKTLLFFIIGSLVYITGYRQYQYLNGLAKKEPLFGVAFIIMIFAIGGVPPFSGFPGKVLIFQGALQNGNYIGLALMIITSLIAMYSLFRIFFYMYFGDKDGEEVNFKKIPLYRKRILSILVVVVIAIGIAAPVVLNVTSDATELNTSDQLYQKLVNPHLKGED</sequence>
<evidence type="ECO:0000250" key="1"/>
<evidence type="ECO:0000255" key="2"/>
<evidence type="ECO:0000305" key="3"/>
<feature type="chain" id="PRO_0000372238" description="Putative antiporter subunit mnhD2">
    <location>
        <begin position="1"/>
        <end position="498"/>
    </location>
</feature>
<feature type="transmembrane region" description="Helical" evidence="2">
    <location>
        <begin position="2"/>
        <end position="22"/>
    </location>
</feature>
<feature type="transmembrane region" description="Helical" evidence="2">
    <location>
        <begin position="32"/>
        <end position="52"/>
    </location>
</feature>
<feature type="transmembrane region" description="Helical" evidence="2">
    <location>
        <begin position="78"/>
        <end position="98"/>
    </location>
</feature>
<feature type="transmembrane region" description="Helical" evidence="2">
    <location>
        <begin position="108"/>
        <end position="128"/>
    </location>
</feature>
<feature type="transmembrane region" description="Helical" evidence="2">
    <location>
        <begin position="130"/>
        <end position="150"/>
    </location>
</feature>
<feature type="transmembrane region" description="Helical" evidence="2">
    <location>
        <begin position="161"/>
        <end position="181"/>
    </location>
</feature>
<feature type="transmembrane region" description="Helical" evidence="2">
    <location>
        <begin position="209"/>
        <end position="229"/>
    </location>
</feature>
<feature type="transmembrane region" description="Helical" evidence="2">
    <location>
        <begin position="240"/>
        <end position="260"/>
    </location>
</feature>
<feature type="transmembrane region" description="Helical" evidence="2">
    <location>
        <begin position="271"/>
        <end position="291"/>
    </location>
</feature>
<feature type="transmembrane region" description="Helical" evidence="2">
    <location>
        <begin position="308"/>
        <end position="328"/>
    </location>
</feature>
<feature type="transmembrane region" description="Helical" evidence="2">
    <location>
        <begin position="330"/>
        <end position="350"/>
    </location>
</feature>
<feature type="transmembrane region" description="Helical" evidence="2">
    <location>
        <begin position="369"/>
        <end position="389"/>
    </location>
</feature>
<feature type="transmembrane region" description="Helical" evidence="2">
    <location>
        <begin position="406"/>
        <end position="426"/>
    </location>
</feature>
<feature type="transmembrane region" description="Helical" evidence="2">
    <location>
        <begin position="451"/>
        <end position="471"/>
    </location>
</feature>
<name>MNHD2_STAAN</name>
<reference key="1">
    <citation type="journal article" date="2001" name="Lancet">
        <title>Whole genome sequencing of meticillin-resistant Staphylococcus aureus.</title>
        <authorList>
            <person name="Kuroda M."/>
            <person name="Ohta T."/>
            <person name="Uchiyama I."/>
            <person name="Baba T."/>
            <person name="Yuzawa H."/>
            <person name="Kobayashi I."/>
            <person name="Cui L."/>
            <person name="Oguchi A."/>
            <person name="Aoki K."/>
            <person name="Nagai Y."/>
            <person name="Lian J.-Q."/>
            <person name="Ito T."/>
            <person name="Kanamori M."/>
            <person name="Matsumaru H."/>
            <person name="Maruyama A."/>
            <person name="Murakami H."/>
            <person name="Hosoyama A."/>
            <person name="Mizutani-Ui Y."/>
            <person name="Takahashi N.K."/>
            <person name="Sawano T."/>
            <person name="Inoue R."/>
            <person name="Kaito C."/>
            <person name="Sekimizu K."/>
            <person name="Hirakawa H."/>
            <person name="Kuhara S."/>
            <person name="Goto S."/>
            <person name="Yabuzaki J."/>
            <person name="Kanehisa M."/>
            <person name="Yamashita A."/>
            <person name="Oshima K."/>
            <person name="Furuya K."/>
            <person name="Yoshino C."/>
            <person name="Shiba T."/>
            <person name="Hattori M."/>
            <person name="Ogasawara N."/>
            <person name="Hayashi H."/>
            <person name="Hiramatsu K."/>
        </authorList>
    </citation>
    <scope>NUCLEOTIDE SEQUENCE [LARGE SCALE GENOMIC DNA]</scope>
    <source>
        <strain>N315</strain>
    </source>
</reference>
<comment type="subunit">
    <text evidence="1">May form a heterooligomeric complex that consists of seven subunits: mnhA2, mnhB2, mnhC2, mnhD2, mnhE2, mnhF2 and mnhG2.</text>
</comment>
<comment type="subcellular location">
    <subcellularLocation>
        <location evidence="3">Cell membrane</location>
        <topology evidence="3">Multi-pass membrane protein</topology>
    </subcellularLocation>
</comment>
<comment type="similarity">
    <text evidence="3">Belongs to the CPA3 antiporters (TC 2.A.63) subunit D family.</text>
</comment>